<name>RA212_ARATH</name>
<proteinExistence type="evidence at protein level"/>
<accession>Q9SSA8</accession>
<accession>O23113</accession>
<accession>Q8L9V3</accession>
<comment type="function">
    <text evidence="2 3">Transcription factor involved in the activation of hypoxic gene expression and in ethylene response. Partially redundant with RAP2-2. Acts as a downstream regulator in the ethylene signaling pathway.</text>
</comment>
<comment type="activity regulation">
    <text evidence="4">Ethylene-responsive transcription factor RAP2-12, N-terminally processed: The N-terminal cysteine residue of can be oxidized by PCO1 or PCO2, thus preparing the protein for N-end rule pathway-mediated proteasomal degradation.</text>
</comment>
<comment type="subunit">
    <text evidence="2">Interacts with ACBP1 and ACBP2.</text>
</comment>
<comment type="interaction">
    <interactant intactId="EBI-4441057">
        <id>Q9SSA8</id>
    </interactant>
    <interactant intactId="EBI-2008643">
        <id>Q9SM23</id>
        <label>ACBP1</label>
    </interactant>
    <organismsDiffer>false</organismsDiffer>
    <experiments>3</experiments>
</comment>
<comment type="interaction">
    <interactant intactId="EBI-4441057">
        <id>Q9SSA8</id>
    </interactant>
    <interactant intactId="EBI-368234">
        <id>Q9STP8</id>
        <label>ACBP2</label>
    </interactant>
    <organismsDiffer>false</organismsDiffer>
    <experiments>3</experiments>
</comment>
<comment type="interaction">
    <interactant intactId="EBI-4441057">
        <id>Q9SSA8</id>
    </interactant>
    <interactant intactId="EBI-25517163">
        <id>Q683C9</id>
        <label>AUR2</label>
    </interactant>
    <organismsDiffer>false</organismsDiffer>
    <experiments>3</experiments>
</comment>
<comment type="interaction">
    <interactant intactId="EBI-4441057">
        <id>Q9SSA8</id>
    </interactant>
    <interactant intactId="EBI-4453230">
        <id>O80902</id>
        <label>CIPK22</label>
    </interactant>
    <organismsDiffer>false</organismsDiffer>
    <experiments>3</experiments>
</comment>
<comment type="interaction">
    <interactant intactId="EBI-4441057">
        <id>Q9SSA8</id>
    </interactant>
    <interactant intactId="EBI-16122303">
        <id>Q8RWY5</id>
        <label>HRA1</label>
    </interactant>
    <organismsDiffer>false</organismsDiffer>
    <experiments>4</experiments>
</comment>
<comment type="interaction">
    <interactant intactId="EBI-4441057">
        <id>Q9SSA8</id>
    </interactant>
    <interactant intactId="EBI-9160824">
        <id>Q8VYN2</id>
        <label>PVA42</label>
    </interactant>
    <organismsDiffer>false</organismsDiffer>
    <experiments>3</experiments>
</comment>
<comment type="interaction">
    <interactant intactId="EBI-4441057">
        <id>Q9SSA8</id>
    </interactant>
    <interactant intactId="EBI-25519358">
        <id>A2RVU3</id>
    </interactant>
    <organismsDiffer>false</organismsDiffer>
    <experiments>3</experiments>
</comment>
<comment type="subcellular location">
    <subcellularLocation>
        <location evidence="2">Cell membrane</location>
    </subcellularLocation>
    <subcellularLocation>
        <location evidence="1 2">Nucleus</location>
    </subcellularLocation>
    <text>Localizes to the plasma membrane under aerobic conditions, but accumulates in the nucleus upon hypoxia.</text>
</comment>
<comment type="alternative products">
    <event type="alternative splicing"/>
    <isoform>
        <id>Q9SSA8-1</id>
        <name>1</name>
        <sequence type="displayed"/>
    </isoform>
    <text>A number of isoforms are produced. According to EST sequences.</text>
</comment>
<comment type="tissue specificity">
    <text evidence="2">Highly expressed in seedlings, leaves, flowers, siliques and germinating seeds.</text>
</comment>
<comment type="induction">
    <text evidence="2">Up-regulated by hypoxia but not by ethylene.</text>
</comment>
<comment type="domain">
    <text evidence="2">The N-terminus (1-13) is important for the regulation of the oxygen-dependent activation of the transcription factor activity, an internal region (123-177) is required for the interactions with ACPB1 and ACPB2, while the C-terminus (343-358) is required for positive regulation of gene transcription.</text>
</comment>
<comment type="miscellaneous">
    <text>The N-terminus qualifies RAP2-12 as candidate substrate of the N-end rule pathway for protein destabilization. The oxygen-dependent oxidation of Cys-2 prevents hypoxic gene expression via the destabilization of RAP2-12 in air. When the oxygen concentration decreases, Cys oxidation is prevented and an active RAP2.12 accumulates in the nucleus.</text>
</comment>
<comment type="similarity">
    <text evidence="5">Belongs to the AP2/ERF transcription factor family. ERF subfamily.</text>
</comment>
<reference key="1">
    <citation type="journal article" date="2000" name="Nature">
        <title>Sequence and analysis of chromosome 1 of the plant Arabidopsis thaliana.</title>
        <authorList>
            <person name="Theologis A."/>
            <person name="Ecker J.R."/>
            <person name="Palm C.J."/>
            <person name="Federspiel N.A."/>
            <person name="Kaul S."/>
            <person name="White O."/>
            <person name="Alonso J."/>
            <person name="Altafi H."/>
            <person name="Araujo R."/>
            <person name="Bowman C.L."/>
            <person name="Brooks S.Y."/>
            <person name="Buehler E."/>
            <person name="Chan A."/>
            <person name="Chao Q."/>
            <person name="Chen H."/>
            <person name="Cheuk R.F."/>
            <person name="Chin C.W."/>
            <person name="Chung M.K."/>
            <person name="Conn L."/>
            <person name="Conway A.B."/>
            <person name="Conway A.R."/>
            <person name="Creasy T.H."/>
            <person name="Dewar K."/>
            <person name="Dunn P."/>
            <person name="Etgu P."/>
            <person name="Feldblyum T.V."/>
            <person name="Feng J.-D."/>
            <person name="Fong B."/>
            <person name="Fujii C.Y."/>
            <person name="Gill J.E."/>
            <person name="Goldsmith A.D."/>
            <person name="Haas B."/>
            <person name="Hansen N.F."/>
            <person name="Hughes B."/>
            <person name="Huizar L."/>
            <person name="Hunter J.L."/>
            <person name="Jenkins J."/>
            <person name="Johnson-Hopson C."/>
            <person name="Khan S."/>
            <person name="Khaykin E."/>
            <person name="Kim C.J."/>
            <person name="Koo H.L."/>
            <person name="Kremenetskaia I."/>
            <person name="Kurtz D.B."/>
            <person name="Kwan A."/>
            <person name="Lam B."/>
            <person name="Langin-Hooper S."/>
            <person name="Lee A."/>
            <person name="Lee J.M."/>
            <person name="Lenz C.A."/>
            <person name="Li J.H."/>
            <person name="Li Y.-P."/>
            <person name="Lin X."/>
            <person name="Liu S.X."/>
            <person name="Liu Z.A."/>
            <person name="Luros J.S."/>
            <person name="Maiti R."/>
            <person name="Marziali A."/>
            <person name="Militscher J."/>
            <person name="Miranda M."/>
            <person name="Nguyen M."/>
            <person name="Nierman W.C."/>
            <person name="Osborne B.I."/>
            <person name="Pai G."/>
            <person name="Peterson J."/>
            <person name="Pham P.K."/>
            <person name="Rizzo M."/>
            <person name="Rooney T."/>
            <person name="Rowley D."/>
            <person name="Sakano H."/>
            <person name="Salzberg S.L."/>
            <person name="Schwartz J.R."/>
            <person name="Shinn P."/>
            <person name="Southwick A.M."/>
            <person name="Sun H."/>
            <person name="Tallon L.J."/>
            <person name="Tambunga G."/>
            <person name="Toriumi M.J."/>
            <person name="Town C.D."/>
            <person name="Utterback T."/>
            <person name="Van Aken S."/>
            <person name="Vaysberg M."/>
            <person name="Vysotskaia V.S."/>
            <person name="Walker M."/>
            <person name="Wu D."/>
            <person name="Yu G."/>
            <person name="Fraser C.M."/>
            <person name="Venter J.C."/>
            <person name="Davis R.W."/>
        </authorList>
    </citation>
    <scope>NUCLEOTIDE SEQUENCE [LARGE SCALE GENOMIC DNA]</scope>
    <source>
        <strain>cv. Columbia</strain>
    </source>
</reference>
<reference key="2">
    <citation type="journal article" date="2017" name="Plant J.">
        <title>Araport11: a complete reannotation of the Arabidopsis thaliana reference genome.</title>
        <authorList>
            <person name="Cheng C.Y."/>
            <person name="Krishnakumar V."/>
            <person name="Chan A.P."/>
            <person name="Thibaud-Nissen F."/>
            <person name="Schobel S."/>
            <person name="Town C.D."/>
        </authorList>
    </citation>
    <scope>GENOME REANNOTATION</scope>
    <source>
        <strain>cv. Columbia</strain>
    </source>
</reference>
<reference key="3">
    <citation type="journal article" date="2003" name="Science">
        <title>Empirical analysis of transcriptional activity in the Arabidopsis genome.</title>
        <authorList>
            <person name="Yamada K."/>
            <person name="Lim J."/>
            <person name="Dale J.M."/>
            <person name="Chen H."/>
            <person name="Shinn P."/>
            <person name="Palm C.J."/>
            <person name="Southwick A.M."/>
            <person name="Wu H.C."/>
            <person name="Kim C.J."/>
            <person name="Nguyen M."/>
            <person name="Pham P.K."/>
            <person name="Cheuk R.F."/>
            <person name="Karlin-Newmann G."/>
            <person name="Liu S.X."/>
            <person name="Lam B."/>
            <person name="Sakano H."/>
            <person name="Wu T."/>
            <person name="Yu G."/>
            <person name="Miranda M."/>
            <person name="Quach H.L."/>
            <person name="Tripp M."/>
            <person name="Chang C.H."/>
            <person name="Lee J.M."/>
            <person name="Toriumi M.J."/>
            <person name="Chan M.M."/>
            <person name="Tang C.C."/>
            <person name="Onodera C.S."/>
            <person name="Deng J.M."/>
            <person name="Akiyama K."/>
            <person name="Ansari Y."/>
            <person name="Arakawa T."/>
            <person name="Banh J."/>
            <person name="Banno F."/>
            <person name="Bowser L."/>
            <person name="Brooks S.Y."/>
            <person name="Carninci P."/>
            <person name="Chao Q."/>
            <person name="Choy N."/>
            <person name="Enju A."/>
            <person name="Goldsmith A.D."/>
            <person name="Gurjal M."/>
            <person name="Hansen N.F."/>
            <person name="Hayashizaki Y."/>
            <person name="Johnson-Hopson C."/>
            <person name="Hsuan V.W."/>
            <person name="Iida K."/>
            <person name="Karnes M."/>
            <person name="Khan S."/>
            <person name="Koesema E."/>
            <person name="Ishida J."/>
            <person name="Jiang P.X."/>
            <person name="Jones T."/>
            <person name="Kawai J."/>
            <person name="Kamiya A."/>
            <person name="Meyers C."/>
            <person name="Nakajima M."/>
            <person name="Narusaka M."/>
            <person name="Seki M."/>
            <person name="Sakurai T."/>
            <person name="Satou M."/>
            <person name="Tamse R."/>
            <person name="Vaysberg M."/>
            <person name="Wallender E.K."/>
            <person name="Wong C."/>
            <person name="Yamamura Y."/>
            <person name="Yuan S."/>
            <person name="Shinozaki K."/>
            <person name="Davis R.W."/>
            <person name="Theologis A."/>
            <person name="Ecker J.R."/>
        </authorList>
    </citation>
    <scope>NUCLEOTIDE SEQUENCE [LARGE SCALE MRNA]</scope>
    <source>
        <strain>cv. Columbia</strain>
    </source>
</reference>
<reference key="4">
    <citation type="submission" date="2002-03" db="EMBL/GenBank/DDBJ databases">
        <title>Full-length cDNA from Arabidopsis thaliana.</title>
        <authorList>
            <person name="Brover V.V."/>
            <person name="Troukhan M.E."/>
            <person name="Alexandrov N.A."/>
            <person name="Lu Y.-P."/>
            <person name="Flavell R.B."/>
            <person name="Feldmann K.A."/>
        </authorList>
    </citation>
    <scope>NUCLEOTIDE SEQUENCE [LARGE SCALE MRNA]</scope>
</reference>
<reference key="5">
    <citation type="journal article" date="1997" name="Proc. Natl. Acad. Sci. U.S.A.">
        <title>The AP2 domain of APETALA2 defines a large new family of DNA binding proteins in Arabidopsis.</title>
        <authorList>
            <person name="Okamuro J.K."/>
            <person name="Caster B."/>
            <person name="Villarroel R."/>
            <person name="Van Montagu M."/>
            <person name="Jofuku K.D."/>
        </authorList>
    </citation>
    <scope>NUCLEOTIDE SEQUENCE [MRNA] OF 42-358</scope>
</reference>
<reference key="6">
    <citation type="journal article" date="2006" name="Plant Physiol.">
        <title>Genome-wide analysis of the ERF gene family in Arabidopsis and rice.</title>
        <authorList>
            <person name="Nakano T."/>
            <person name="Suzuki K."/>
            <person name="Fujimura T."/>
            <person name="Shinshi H."/>
        </authorList>
    </citation>
    <scope>GENE FAMILY</scope>
    <scope>NOMENCLATURE</scope>
</reference>
<reference key="7">
    <citation type="journal article" date="2011" name="Nature">
        <title>Oxygen sensing in plants is mediated by an N-end rule pathway for protein destabilization.</title>
        <authorList>
            <person name="Licausi F."/>
            <person name="Kosmacz M."/>
            <person name="Weits D.A."/>
            <person name="Giuntoli B."/>
            <person name="Giorgi F.M."/>
            <person name="Voesenek L.A."/>
            <person name="Perata P."/>
            <person name="van Dongen J.T."/>
        </authorList>
    </citation>
    <scope>FUNCTION</scope>
    <scope>TISSUE SPECIFICITY</scope>
    <scope>INDUCTION BY HYPOXIA</scope>
    <scope>DOMAIN</scope>
    <scope>SUBCELLULAR LOCATION</scope>
    <scope>INTERACTION WITH ACBP1 AND ACBP2</scope>
    <scope>MUTAGENESIS OF CYS-2</scope>
</reference>
<reference key="8">
    <citation type="journal article" date="2012" name="New Phytol.">
        <title>Arabidopsis RAP2.2 plays an important role in plant resistance to Botrytis cinerea and ethylene responses.</title>
        <authorList>
            <person name="Zhao Y."/>
            <person name="Wei T."/>
            <person name="Yin K.Q."/>
            <person name="Chen Z."/>
            <person name="Gu H."/>
            <person name="Qu L.J."/>
            <person name="Qin G."/>
        </authorList>
    </citation>
    <scope>FUNCTION</scope>
</reference>
<reference key="9">
    <citation type="journal article" date="2014" name="Nat. Commun.">
        <title>Plant cysteine oxidases control the oxygen-dependent branch of the N-end-rule pathway.</title>
        <authorList>
            <person name="Weits D.A."/>
            <person name="Giuntoli B."/>
            <person name="Kosmacz M."/>
            <person name="Parlanti S."/>
            <person name="Hubberten H.M."/>
            <person name="Riegler H."/>
            <person name="Hoefgen R."/>
            <person name="Perata P."/>
            <person name="van Dongen J.T."/>
            <person name="Licausi F."/>
        </authorList>
    </citation>
    <scope>ACTIVITY REGULATION</scope>
    <scope>MUTAGENESIS OF CYS-2</scope>
</reference>
<dbReference type="EMBL" id="AC009324">
    <property type="protein sequence ID" value="AAF02863.1"/>
    <property type="molecule type" value="Genomic_DNA"/>
</dbReference>
<dbReference type="EMBL" id="CP002684">
    <property type="protein sequence ID" value="AEE33022.1"/>
    <property type="molecule type" value="Genomic_DNA"/>
</dbReference>
<dbReference type="EMBL" id="CP002684">
    <property type="protein sequence ID" value="AEE33023.1"/>
    <property type="molecule type" value="Genomic_DNA"/>
</dbReference>
<dbReference type="EMBL" id="AY037260">
    <property type="protein sequence ID" value="AAK59861.1"/>
    <property type="molecule type" value="mRNA"/>
</dbReference>
<dbReference type="EMBL" id="AY057545">
    <property type="protein sequence ID" value="AAL09785.1"/>
    <property type="molecule type" value="mRNA"/>
</dbReference>
<dbReference type="EMBL" id="AY113051">
    <property type="protein sequence ID" value="AAM47359.1"/>
    <property type="molecule type" value="mRNA"/>
</dbReference>
<dbReference type="EMBL" id="AY088204">
    <property type="protein sequence ID" value="AAM65746.1"/>
    <property type="molecule type" value="mRNA"/>
</dbReference>
<dbReference type="EMBL" id="AF003105">
    <property type="protein sequence ID" value="AAC49778.1"/>
    <property type="molecule type" value="mRNA"/>
</dbReference>
<dbReference type="PIR" id="D96579">
    <property type="entry name" value="D96579"/>
</dbReference>
<dbReference type="RefSeq" id="NP_001031185.1">
    <molecule id="Q9SSA8-1"/>
    <property type="nucleotide sequence ID" value="NM_001036108.3"/>
</dbReference>
<dbReference type="RefSeq" id="NP_175794.1">
    <molecule id="Q9SSA8-1"/>
    <property type="nucleotide sequence ID" value="NM_104269.4"/>
</dbReference>
<dbReference type="SMR" id="Q9SSA8"/>
<dbReference type="BioGRID" id="27054">
    <property type="interactions" value="12"/>
</dbReference>
<dbReference type="DIP" id="DIP-60469N"/>
<dbReference type="ELM" id="Q9SSA8"/>
<dbReference type="FunCoup" id="Q9SSA8">
    <property type="interactions" value="2264"/>
</dbReference>
<dbReference type="IntAct" id="Q9SSA8">
    <property type="interactions" value="15"/>
</dbReference>
<dbReference type="STRING" id="3702.Q9SSA8"/>
<dbReference type="PaxDb" id="3702-AT1G53910.1"/>
<dbReference type="EnsemblPlants" id="AT1G53910.1">
    <molecule id="Q9SSA8-1"/>
    <property type="protein sequence ID" value="AT1G53910.1"/>
    <property type="gene ID" value="AT1G53910"/>
</dbReference>
<dbReference type="EnsemblPlants" id="AT1G53910.2">
    <molecule id="Q9SSA8-1"/>
    <property type="protein sequence ID" value="AT1G53910.2"/>
    <property type="gene ID" value="AT1G53910"/>
</dbReference>
<dbReference type="GeneID" id="841829"/>
<dbReference type="Gramene" id="AT1G53910.1">
    <molecule id="Q9SSA8-1"/>
    <property type="protein sequence ID" value="AT1G53910.1"/>
    <property type="gene ID" value="AT1G53910"/>
</dbReference>
<dbReference type="Gramene" id="AT1G53910.2">
    <molecule id="Q9SSA8-1"/>
    <property type="protein sequence ID" value="AT1G53910.2"/>
    <property type="gene ID" value="AT1G53910"/>
</dbReference>
<dbReference type="KEGG" id="ath:AT1G53910"/>
<dbReference type="Araport" id="AT1G53910"/>
<dbReference type="TAIR" id="AT1G53910">
    <property type="gene designation" value="RAP2.12"/>
</dbReference>
<dbReference type="eggNOG" id="ENOG502QV26">
    <property type="taxonomic scope" value="Eukaryota"/>
</dbReference>
<dbReference type="InParanoid" id="Q9SSA8"/>
<dbReference type="OMA" id="SCDTTQD"/>
<dbReference type="PhylomeDB" id="Q9SSA8"/>
<dbReference type="PRO" id="PR:Q9SSA8"/>
<dbReference type="Proteomes" id="UP000006548">
    <property type="component" value="Chromosome 1"/>
</dbReference>
<dbReference type="ExpressionAtlas" id="Q9SSA8">
    <property type="expression patterns" value="baseline and differential"/>
</dbReference>
<dbReference type="GO" id="GO:0005634">
    <property type="term" value="C:nucleus"/>
    <property type="evidence" value="ECO:0000314"/>
    <property type="project" value="TAIR"/>
</dbReference>
<dbReference type="GO" id="GO:0005886">
    <property type="term" value="C:plasma membrane"/>
    <property type="evidence" value="ECO:0000314"/>
    <property type="project" value="TAIR"/>
</dbReference>
<dbReference type="GO" id="GO:0003700">
    <property type="term" value="F:DNA-binding transcription factor activity"/>
    <property type="evidence" value="ECO:0000250"/>
    <property type="project" value="TAIR"/>
</dbReference>
<dbReference type="GO" id="GO:0000976">
    <property type="term" value="F:transcription cis-regulatory region binding"/>
    <property type="evidence" value="ECO:0000353"/>
    <property type="project" value="TAIR"/>
</dbReference>
<dbReference type="GO" id="GO:0070483">
    <property type="term" value="P:detection of hypoxia"/>
    <property type="evidence" value="ECO:0000270"/>
    <property type="project" value="TAIR"/>
</dbReference>
<dbReference type="GO" id="GO:0009873">
    <property type="term" value="P:ethylene-activated signaling pathway"/>
    <property type="evidence" value="ECO:0007669"/>
    <property type="project" value="UniProtKB-KW"/>
</dbReference>
<dbReference type="GO" id="GO:2000280">
    <property type="term" value="P:regulation of root development"/>
    <property type="evidence" value="ECO:0000315"/>
    <property type="project" value="TAIR"/>
</dbReference>
<dbReference type="GO" id="GO:0001666">
    <property type="term" value="P:response to hypoxia"/>
    <property type="evidence" value="ECO:0000315"/>
    <property type="project" value="TAIR"/>
</dbReference>
<dbReference type="CDD" id="cd00018">
    <property type="entry name" value="AP2"/>
    <property type="match status" value="1"/>
</dbReference>
<dbReference type="FunFam" id="3.30.730.10:FF:000001">
    <property type="entry name" value="Ethylene-responsive transcription factor 2"/>
    <property type="match status" value="1"/>
</dbReference>
<dbReference type="Gene3D" id="3.30.730.10">
    <property type="entry name" value="AP2/ERF domain"/>
    <property type="match status" value="1"/>
</dbReference>
<dbReference type="InterPro" id="IPR001471">
    <property type="entry name" value="AP2/ERF_dom"/>
</dbReference>
<dbReference type="InterPro" id="IPR036955">
    <property type="entry name" value="AP2/ERF_dom_sf"/>
</dbReference>
<dbReference type="InterPro" id="IPR016177">
    <property type="entry name" value="DNA-bd_dom_sf"/>
</dbReference>
<dbReference type="InterPro" id="IPR044808">
    <property type="entry name" value="ERF_plant"/>
</dbReference>
<dbReference type="PANTHER" id="PTHR31190">
    <property type="entry name" value="DNA-BINDING DOMAIN"/>
    <property type="match status" value="1"/>
</dbReference>
<dbReference type="PANTHER" id="PTHR31190:SF480">
    <property type="entry name" value="ETHYLENE-RESPONSIVE TRANSCRIPTION FACTOR RAP2-12"/>
    <property type="match status" value="1"/>
</dbReference>
<dbReference type="Pfam" id="PF00847">
    <property type="entry name" value="AP2"/>
    <property type="match status" value="1"/>
</dbReference>
<dbReference type="PRINTS" id="PR00367">
    <property type="entry name" value="ETHRSPELEMNT"/>
</dbReference>
<dbReference type="SMART" id="SM00380">
    <property type="entry name" value="AP2"/>
    <property type="match status" value="1"/>
</dbReference>
<dbReference type="SUPFAM" id="SSF54171">
    <property type="entry name" value="DNA-binding domain"/>
    <property type="match status" value="1"/>
</dbReference>
<dbReference type="PROSITE" id="PS51032">
    <property type="entry name" value="AP2_ERF"/>
    <property type="match status" value="1"/>
</dbReference>
<organism>
    <name type="scientific">Arabidopsis thaliana</name>
    <name type="common">Mouse-ear cress</name>
    <dbReference type="NCBI Taxonomy" id="3702"/>
    <lineage>
        <taxon>Eukaryota</taxon>
        <taxon>Viridiplantae</taxon>
        <taxon>Streptophyta</taxon>
        <taxon>Embryophyta</taxon>
        <taxon>Tracheophyta</taxon>
        <taxon>Spermatophyta</taxon>
        <taxon>Magnoliopsida</taxon>
        <taxon>eudicotyledons</taxon>
        <taxon>Gunneridae</taxon>
        <taxon>Pentapetalae</taxon>
        <taxon>rosids</taxon>
        <taxon>malvids</taxon>
        <taxon>Brassicales</taxon>
        <taxon>Brassicaceae</taxon>
        <taxon>Camelineae</taxon>
        <taxon>Arabidopsis</taxon>
    </lineage>
</organism>
<keyword id="KW-0010">Activator</keyword>
<keyword id="KW-0025">Alternative splicing</keyword>
<keyword id="KW-1003">Cell membrane</keyword>
<keyword id="KW-0238">DNA-binding</keyword>
<keyword id="KW-0936">Ethylene signaling pathway</keyword>
<keyword id="KW-0472">Membrane</keyword>
<keyword id="KW-0539">Nucleus</keyword>
<keyword id="KW-1185">Reference proteome</keyword>
<keyword id="KW-0804">Transcription</keyword>
<keyword id="KW-0805">Transcription regulation</keyword>
<sequence length="358" mass="39801">MCGGAIISDFIPPPRSRRVTSEFIWPDLKKNLKGSKKSSKNRSNFFDFDAEFEADFQGFKDDSSIDCDDDFDVGDVFADVKPFVFTSTPKPAVSAAAEGSVFGKKVTGLDGDAEKSANRKRKNQYRGIRQRPWGKWAAEIRDPREGARIWLGTFKTAEEAARAYDAAARRIRGSKAKVNFPEENMKANSQKRSVKANLQKPVAKPNPNPSPALVQNSNISFENMCFMEEKHQVSNNNNNQFGMTNSVDAGCNGYQYFSSDQGSNSFDCSEFGWSDQAPITPDISSAVINNNNSALFFEEANPAKKLKSMDFETPYNNTEWDASLDFLNEDAVTTQDNGANPMDLWSIDEIHSMIGGVF</sequence>
<protein>
    <recommendedName>
        <fullName>Ethylene-responsive transcription factor RAP2-12</fullName>
    </recommendedName>
    <alternativeName>
        <fullName>Protein RELATED TO APETALA2 12</fullName>
    </alternativeName>
</protein>
<evidence type="ECO:0000255" key="1">
    <source>
        <dbReference type="PROSITE-ProRule" id="PRU00366"/>
    </source>
</evidence>
<evidence type="ECO:0000269" key="2">
    <source>
    </source>
</evidence>
<evidence type="ECO:0000269" key="3">
    <source>
    </source>
</evidence>
<evidence type="ECO:0000269" key="4">
    <source>
    </source>
</evidence>
<evidence type="ECO:0000305" key="5"/>
<gene>
    <name type="primary">RAP2-12</name>
    <name type="synonym">ERF074</name>
    <name type="ordered locus">At1g53910</name>
    <name type="ORF">T18A20.14</name>
</gene>
<feature type="chain" id="PRO_0000297941" description="Ethylene-responsive transcription factor RAP2-12">
    <location>
        <begin position="1"/>
        <end position="358"/>
    </location>
</feature>
<feature type="DNA-binding region" description="AP2/ERF" evidence="1">
    <location>
        <begin position="124"/>
        <end position="181"/>
    </location>
</feature>
<feature type="mutagenesis site" description="Increased lifetime of the protein and accumulation in the nucleus." evidence="2 4">
    <original>C</original>
    <variation>A</variation>
    <location>
        <position position="2"/>
    </location>
</feature>
<feature type="sequence conflict" description="In Ref. 4; AAM65746." evidence="5" ref="4">
    <original>D</original>
    <variation>E</variation>
    <location>
        <position position="112"/>
    </location>
</feature>
<feature type="sequence conflict" description="In Ref. 4; AAM65746." evidence="5" ref="4">
    <original>M</original>
    <variation>L</variation>
    <location>
        <position position="185"/>
    </location>
</feature>